<gene>
    <name evidence="5" type="primary">CFAP144</name>
    <name type="synonym">FAM183A</name>
</gene>
<organism>
    <name type="scientific">Homo sapiens</name>
    <name type="common">Human</name>
    <dbReference type="NCBI Taxonomy" id="9606"/>
    <lineage>
        <taxon>Eukaryota</taxon>
        <taxon>Metazoa</taxon>
        <taxon>Chordata</taxon>
        <taxon>Craniata</taxon>
        <taxon>Vertebrata</taxon>
        <taxon>Euteleostomi</taxon>
        <taxon>Mammalia</taxon>
        <taxon>Eutheria</taxon>
        <taxon>Euarchontoglires</taxon>
        <taxon>Primates</taxon>
        <taxon>Haplorrhini</taxon>
        <taxon>Catarrhini</taxon>
        <taxon>Hominidae</taxon>
        <taxon>Homo</taxon>
    </lineage>
</organism>
<reference key="1">
    <citation type="journal article" date="2006" name="Nature">
        <title>The DNA sequence and biological annotation of human chromosome 1.</title>
        <authorList>
            <person name="Gregory S.G."/>
            <person name="Barlow K.F."/>
            <person name="McLay K.E."/>
            <person name="Kaul R."/>
            <person name="Swarbreck D."/>
            <person name="Dunham A."/>
            <person name="Scott C.E."/>
            <person name="Howe K.L."/>
            <person name="Woodfine K."/>
            <person name="Spencer C.C.A."/>
            <person name="Jones M.C."/>
            <person name="Gillson C."/>
            <person name="Searle S."/>
            <person name="Zhou Y."/>
            <person name="Kokocinski F."/>
            <person name="McDonald L."/>
            <person name="Evans R."/>
            <person name="Phillips K."/>
            <person name="Atkinson A."/>
            <person name="Cooper R."/>
            <person name="Jones C."/>
            <person name="Hall R.E."/>
            <person name="Andrews T.D."/>
            <person name="Lloyd C."/>
            <person name="Ainscough R."/>
            <person name="Almeida J.P."/>
            <person name="Ambrose K.D."/>
            <person name="Anderson F."/>
            <person name="Andrew R.W."/>
            <person name="Ashwell R.I.S."/>
            <person name="Aubin K."/>
            <person name="Babbage A.K."/>
            <person name="Bagguley C.L."/>
            <person name="Bailey J."/>
            <person name="Beasley H."/>
            <person name="Bethel G."/>
            <person name="Bird C.P."/>
            <person name="Bray-Allen S."/>
            <person name="Brown J.Y."/>
            <person name="Brown A.J."/>
            <person name="Buckley D."/>
            <person name="Burton J."/>
            <person name="Bye J."/>
            <person name="Carder C."/>
            <person name="Chapman J.C."/>
            <person name="Clark S.Y."/>
            <person name="Clarke G."/>
            <person name="Clee C."/>
            <person name="Cobley V."/>
            <person name="Collier R.E."/>
            <person name="Corby N."/>
            <person name="Coville G.J."/>
            <person name="Davies J."/>
            <person name="Deadman R."/>
            <person name="Dunn M."/>
            <person name="Earthrowl M."/>
            <person name="Ellington A.G."/>
            <person name="Errington H."/>
            <person name="Frankish A."/>
            <person name="Frankland J."/>
            <person name="French L."/>
            <person name="Garner P."/>
            <person name="Garnett J."/>
            <person name="Gay L."/>
            <person name="Ghori M.R.J."/>
            <person name="Gibson R."/>
            <person name="Gilby L.M."/>
            <person name="Gillett W."/>
            <person name="Glithero R.J."/>
            <person name="Grafham D.V."/>
            <person name="Griffiths C."/>
            <person name="Griffiths-Jones S."/>
            <person name="Grocock R."/>
            <person name="Hammond S."/>
            <person name="Harrison E.S.I."/>
            <person name="Hart E."/>
            <person name="Haugen E."/>
            <person name="Heath P.D."/>
            <person name="Holmes S."/>
            <person name="Holt K."/>
            <person name="Howden P.J."/>
            <person name="Hunt A.R."/>
            <person name="Hunt S.E."/>
            <person name="Hunter G."/>
            <person name="Isherwood J."/>
            <person name="James R."/>
            <person name="Johnson C."/>
            <person name="Johnson D."/>
            <person name="Joy A."/>
            <person name="Kay M."/>
            <person name="Kershaw J.K."/>
            <person name="Kibukawa M."/>
            <person name="Kimberley A.M."/>
            <person name="King A."/>
            <person name="Knights A.J."/>
            <person name="Lad H."/>
            <person name="Laird G."/>
            <person name="Lawlor S."/>
            <person name="Leongamornlert D.A."/>
            <person name="Lloyd D.M."/>
            <person name="Loveland J."/>
            <person name="Lovell J."/>
            <person name="Lush M.J."/>
            <person name="Lyne R."/>
            <person name="Martin S."/>
            <person name="Mashreghi-Mohammadi M."/>
            <person name="Matthews L."/>
            <person name="Matthews N.S.W."/>
            <person name="McLaren S."/>
            <person name="Milne S."/>
            <person name="Mistry S."/>
            <person name="Moore M.J.F."/>
            <person name="Nickerson T."/>
            <person name="O'Dell C.N."/>
            <person name="Oliver K."/>
            <person name="Palmeiri A."/>
            <person name="Palmer S.A."/>
            <person name="Parker A."/>
            <person name="Patel D."/>
            <person name="Pearce A.V."/>
            <person name="Peck A.I."/>
            <person name="Pelan S."/>
            <person name="Phelps K."/>
            <person name="Phillimore B.J."/>
            <person name="Plumb R."/>
            <person name="Rajan J."/>
            <person name="Raymond C."/>
            <person name="Rouse G."/>
            <person name="Saenphimmachak C."/>
            <person name="Sehra H.K."/>
            <person name="Sheridan E."/>
            <person name="Shownkeen R."/>
            <person name="Sims S."/>
            <person name="Skuce C.D."/>
            <person name="Smith M."/>
            <person name="Steward C."/>
            <person name="Subramanian S."/>
            <person name="Sycamore N."/>
            <person name="Tracey A."/>
            <person name="Tromans A."/>
            <person name="Van Helmond Z."/>
            <person name="Wall M."/>
            <person name="Wallis J.M."/>
            <person name="White S."/>
            <person name="Whitehead S.L."/>
            <person name="Wilkinson J.E."/>
            <person name="Willey D.L."/>
            <person name="Williams H."/>
            <person name="Wilming L."/>
            <person name="Wray P.W."/>
            <person name="Wu Z."/>
            <person name="Coulson A."/>
            <person name="Vaudin M."/>
            <person name="Sulston J.E."/>
            <person name="Durbin R.M."/>
            <person name="Hubbard T."/>
            <person name="Wooster R."/>
            <person name="Dunham I."/>
            <person name="Carter N.P."/>
            <person name="McVean G."/>
            <person name="Ross M.T."/>
            <person name="Harrow J."/>
            <person name="Olson M.V."/>
            <person name="Beck S."/>
            <person name="Rogers J."/>
            <person name="Bentley D.R."/>
        </authorList>
    </citation>
    <scope>NUCLEOTIDE SEQUENCE [LARGE SCALE GENOMIC DNA]</scope>
</reference>
<reference key="2">
    <citation type="journal article" date="2022" name="Proc. Natl. Acad. Sci. U.S.A.">
        <title>SPACA9 is a lumenal protein of human ciliary singlet and doublet microtubules.</title>
        <authorList>
            <person name="Gui M."/>
            <person name="Croft J.T."/>
            <person name="Zabeo D."/>
            <person name="Acharya V."/>
            <person name="Kollman J.M."/>
            <person name="Burgoyne T."/>
            <person name="Hoog J.L."/>
            <person name="Brown A."/>
        </authorList>
    </citation>
    <scope>STRUCTURE BY ELECTRON MICROSCOPY (3.60 ANGSTROMS) IN ASSOCIATION WITH MICROTUBULES</scope>
    <scope>SUBCELLULAR LOCATION</scope>
    <scope>FUNCTION</scope>
</reference>
<keyword id="KW-0002">3D-structure</keyword>
<keyword id="KW-0966">Cell projection</keyword>
<keyword id="KW-0969">Cilium</keyword>
<keyword id="KW-0963">Cytoplasm</keyword>
<keyword id="KW-0206">Cytoskeleton</keyword>
<keyword id="KW-0282">Flagellum</keyword>
<keyword id="KW-1267">Proteomics identification</keyword>
<keyword id="KW-1185">Reference proteome</keyword>
<evidence type="ECO:0000250" key="1">
    <source>
        <dbReference type="UniProtKB" id="Q5NC57"/>
    </source>
</evidence>
<evidence type="ECO:0000256" key="2">
    <source>
        <dbReference type="SAM" id="MobiDB-lite"/>
    </source>
</evidence>
<evidence type="ECO:0000269" key="3">
    <source>
    </source>
</evidence>
<evidence type="ECO:0000305" key="4"/>
<evidence type="ECO:0000312" key="5">
    <source>
        <dbReference type="HGNC" id="HGNC:34347"/>
    </source>
</evidence>
<proteinExistence type="evidence at protein level"/>
<name>CF144_HUMAN</name>
<accession>A6NL82</accession>
<accession>B7ZBL8</accession>
<dbReference type="EMBL" id="AL139138">
    <property type="status" value="NOT_ANNOTATED_CDS"/>
    <property type="molecule type" value="Genomic_DNA"/>
</dbReference>
<dbReference type="CCDS" id="CCDS44126.1"/>
<dbReference type="RefSeq" id="NP_001094846.2">
    <property type="nucleotide sequence ID" value="NM_001101376.2"/>
</dbReference>
<dbReference type="RefSeq" id="XP_054192653.1">
    <property type="nucleotide sequence ID" value="XM_054336678.1"/>
</dbReference>
<dbReference type="PDB" id="7UNG">
    <property type="method" value="EM"/>
    <property type="resolution" value="3.60 A"/>
    <property type="chains" value="K1=1-134"/>
</dbReference>
<dbReference type="PDB" id="8J07">
    <property type="method" value="EM"/>
    <property type="resolution" value="4.10 A"/>
    <property type="chains" value="7I/7J=1-134"/>
</dbReference>
<dbReference type="PDBsum" id="7UNG"/>
<dbReference type="PDBsum" id="8J07"/>
<dbReference type="EMDB" id="EMD-26624"/>
<dbReference type="EMDB" id="EMD-35888"/>
<dbReference type="SMR" id="A6NL82"/>
<dbReference type="FunCoup" id="A6NL82">
    <property type="interactions" value="55"/>
</dbReference>
<dbReference type="STRING" id="9606.ENSP00000334415"/>
<dbReference type="BioMuta" id="FAM183A"/>
<dbReference type="MassIVE" id="A6NL82"/>
<dbReference type="PaxDb" id="9606-ENSP00000334415"/>
<dbReference type="PeptideAtlas" id="A6NL82"/>
<dbReference type="ProteomicsDB" id="1456"/>
<dbReference type="Antibodypedia" id="77971">
    <property type="antibodies" value="7 antibodies from 4 providers"/>
</dbReference>
<dbReference type="DNASU" id="440585"/>
<dbReference type="Ensembl" id="ENST00000335282.5">
    <property type="protein sequence ID" value="ENSP00000334415.3"/>
    <property type="gene ID" value="ENSG00000186973.11"/>
</dbReference>
<dbReference type="GeneID" id="440585"/>
<dbReference type="KEGG" id="hsa:440585"/>
<dbReference type="MANE-Select" id="ENST00000335282.5">
    <property type="protein sequence ID" value="ENSP00000334415.3"/>
    <property type="RefSeq nucleotide sequence ID" value="NM_001101376.3"/>
    <property type="RefSeq protein sequence ID" value="NP_001094846.2"/>
</dbReference>
<dbReference type="UCSC" id="uc009vwo.4">
    <property type="organism name" value="human"/>
</dbReference>
<dbReference type="AGR" id="HGNC:34347"/>
<dbReference type="CTD" id="440585"/>
<dbReference type="DisGeNET" id="440585"/>
<dbReference type="GeneCards" id="CFAP144"/>
<dbReference type="HGNC" id="HGNC:34347">
    <property type="gene designation" value="CFAP144"/>
</dbReference>
<dbReference type="HPA" id="ENSG00000186973">
    <property type="expression patterns" value="Group enriched (choroid plexus, fallopian tube)"/>
</dbReference>
<dbReference type="MalaCards" id="CFAP144"/>
<dbReference type="MIM" id="621114">
    <property type="type" value="gene"/>
</dbReference>
<dbReference type="neXtProt" id="NX_A6NL82"/>
<dbReference type="OpenTargets" id="ENSG00000186973"/>
<dbReference type="PharmGKB" id="PA164719746"/>
<dbReference type="VEuPathDB" id="HostDB:ENSG00000186973"/>
<dbReference type="eggNOG" id="ENOG502RZSS">
    <property type="taxonomic scope" value="Eukaryota"/>
</dbReference>
<dbReference type="GeneTree" id="ENSGT00390000006224"/>
<dbReference type="InParanoid" id="A6NL82"/>
<dbReference type="OMA" id="YHVNPNR"/>
<dbReference type="OrthoDB" id="7402at9604"/>
<dbReference type="PAN-GO" id="A6NL82">
    <property type="GO annotations" value="1 GO annotation based on evolutionary models"/>
</dbReference>
<dbReference type="PhylomeDB" id="A6NL82"/>
<dbReference type="TreeFam" id="TF329423"/>
<dbReference type="PathwayCommons" id="A6NL82"/>
<dbReference type="BioGRID-ORCS" id="440585">
    <property type="hits" value="21 hits in 1143 CRISPR screens"/>
</dbReference>
<dbReference type="ChiTaRS" id="FAM183A">
    <property type="organism name" value="human"/>
</dbReference>
<dbReference type="GenomeRNAi" id="440585"/>
<dbReference type="Pharos" id="A6NL82">
    <property type="development level" value="Tdark"/>
</dbReference>
<dbReference type="PRO" id="PR:A6NL82"/>
<dbReference type="Proteomes" id="UP000005640">
    <property type="component" value="Chromosome 1"/>
</dbReference>
<dbReference type="RNAct" id="A6NL82">
    <property type="molecule type" value="protein"/>
</dbReference>
<dbReference type="Bgee" id="ENSG00000186973">
    <property type="expression patterns" value="Expressed in right uterine tube and 87 other cell types or tissues"/>
</dbReference>
<dbReference type="ExpressionAtlas" id="A6NL82">
    <property type="expression patterns" value="baseline and differential"/>
</dbReference>
<dbReference type="GO" id="GO:0160112">
    <property type="term" value="C:axonemal B tubule inner sheath"/>
    <property type="evidence" value="ECO:0000250"/>
    <property type="project" value="UniProtKB"/>
</dbReference>
<dbReference type="GO" id="GO:0005879">
    <property type="term" value="C:axonemal microtubule"/>
    <property type="evidence" value="ECO:0000314"/>
    <property type="project" value="UniProtKB"/>
</dbReference>
<dbReference type="GO" id="GO:0097546">
    <property type="term" value="C:ciliary base"/>
    <property type="evidence" value="ECO:0000318"/>
    <property type="project" value="GO_Central"/>
</dbReference>
<dbReference type="GO" id="GO:0036126">
    <property type="term" value="C:sperm flagellum"/>
    <property type="evidence" value="ECO:0000250"/>
    <property type="project" value="UniProtKB"/>
</dbReference>
<dbReference type="GO" id="GO:0008017">
    <property type="term" value="F:microtubule binding"/>
    <property type="evidence" value="ECO:0000314"/>
    <property type="project" value="UniProtKB"/>
</dbReference>
<dbReference type="GO" id="GO:0030317">
    <property type="term" value="P:flagellated sperm motility"/>
    <property type="evidence" value="ECO:0000250"/>
    <property type="project" value="UniProtKB"/>
</dbReference>
<dbReference type="InterPro" id="IPR029214">
    <property type="entry name" value="CFAP144"/>
</dbReference>
<dbReference type="PANTHER" id="PTHR33865:SF2">
    <property type="entry name" value="CILIA- AND FLAGELLA-ASSOCIATED PROTEIN 144"/>
    <property type="match status" value="1"/>
</dbReference>
<dbReference type="PANTHER" id="PTHR33865">
    <property type="entry name" value="PROTEIN FAM183B"/>
    <property type="match status" value="1"/>
</dbReference>
<dbReference type="Pfam" id="PF14886">
    <property type="entry name" value="FAM183"/>
    <property type="match status" value="1"/>
</dbReference>
<comment type="function">
    <text evidence="3">Microtubule inner protein (MIP) part of the dynein-decorated doublet microtubules (DMTs) in cilia axoneme, which is required for motile cilia beating.</text>
</comment>
<comment type="subunit">
    <text evidence="1">Microtubule inner protein component of sperm flagellar doublet microtubules.</text>
</comment>
<comment type="subcellular location">
    <subcellularLocation>
        <location evidence="3">Cytoplasm</location>
        <location evidence="3">Cytoskeleton</location>
        <location evidence="3">Cilium axoneme</location>
    </subcellularLocation>
    <subcellularLocation>
        <location evidence="1">Cytoplasm</location>
        <location evidence="1">Cytoskeleton</location>
        <location evidence="1">Flagellum axoneme</location>
    </subcellularLocation>
</comment>
<comment type="similarity">
    <text evidence="4">Belongs to the CFAP144 family.</text>
</comment>
<feature type="chain" id="PRO_0000340271" description="Cilia- and flagella-associated protein 144">
    <location>
        <begin position="1"/>
        <end position="134"/>
    </location>
</feature>
<feature type="region of interest" description="Disordered" evidence="2">
    <location>
        <begin position="76"/>
        <end position="95"/>
    </location>
</feature>
<sequence>MAGHPKEKVIPDEVHQNQILRELYLKELRTQKLYTQYHVNPLRKIHTVTRKPMSWHDNLEEPADARFLNLIHHAAQGPRKKYPETQTENQEVGWDLEPLINPERHDRRLNHFRVCSDITLYKAKTWGLGDDHHK</sequence>
<protein>
    <recommendedName>
        <fullName>Cilia- and flagella-associated protein 144</fullName>
    </recommendedName>
    <alternativeName>
        <fullName>Protein FAM183A</fullName>
    </alternativeName>
</protein>